<reference key="1">
    <citation type="journal article" date="2006" name="Proc. Natl. Acad. Sci. U.S.A.">
        <title>Identification of genes subject to positive selection in uropathogenic strains of Escherichia coli: a comparative genomics approach.</title>
        <authorList>
            <person name="Chen S.L."/>
            <person name="Hung C.-S."/>
            <person name="Xu J."/>
            <person name="Reigstad C.S."/>
            <person name="Magrini V."/>
            <person name="Sabo A."/>
            <person name="Blasiar D."/>
            <person name="Bieri T."/>
            <person name="Meyer R.R."/>
            <person name="Ozersky P."/>
            <person name="Armstrong J.R."/>
            <person name="Fulton R.S."/>
            <person name="Latreille J.P."/>
            <person name="Spieth J."/>
            <person name="Hooton T.M."/>
            <person name="Mardis E.R."/>
            <person name="Hultgren S.J."/>
            <person name="Gordon J.I."/>
        </authorList>
    </citation>
    <scope>NUCLEOTIDE SEQUENCE [LARGE SCALE GENOMIC DNA]</scope>
    <source>
        <strain>UTI89 / UPEC</strain>
    </source>
</reference>
<keyword id="KW-0378">Hydrolase</keyword>
<proteinExistence type="inferred from homology"/>
<name>GPPA_ECOUT</name>
<dbReference type="EC" id="3.6.1.40" evidence="1"/>
<dbReference type="EMBL" id="CP000243">
    <property type="protein sequence ID" value="ABE09754.1"/>
    <property type="status" value="ALT_INIT"/>
    <property type="molecule type" value="Genomic_DNA"/>
</dbReference>
<dbReference type="RefSeq" id="WP_001314257.1">
    <property type="nucleotide sequence ID" value="NZ_CP064825.1"/>
</dbReference>
<dbReference type="SMR" id="Q1R4G0"/>
<dbReference type="KEGG" id="eci:UTI89_C4333"/>
<dbReference type="HOGENOM" id="CLU_025908_4_0_6"/>
<dbReference type="UniPathway" id="UPA00908">
    <property type="reaction ID" value="UER00885"/>
</dbReference>
<dbReference type="Proteomes" id="UP000001952">
    <property type="component" value="Chromosome"/>
</dbReference>
<dbReference type="GO" id="GO:0008894">
    <property type="term" value="F:guanosine-5'-triphosphate,3'-diphosphate diphosphatase activity"/>
    <property type="evidence" value="ECO:0007669"/>
    <property type="project" value="UniProtKB-UniRule"/>
</dbReference>
<dbReference type="GO" id="GO:0015974">
    <property type="term" value="P:guanosine pentaphosphate catabolic process"/>
    <property type="evidence" value="ECO:0007669"/>
    <property type="project" value="InterPro"/>
</dbReference>
<dbReference type="GO" id="GO:0015970">
    <property type="term" value="P:guanosine tetraphosphate biosynthetic process"/>
    <property type="evidence" value="ECO:0007669"/>
    <property type="project" value="UniProtKB-UniRule"/>
</dbReference>
<dbReference type="GO" id="GO:0015949">
    <property type="term" value="P:nucleobase-containing small molecule interconversion"/>
    <property type="evidence" value="ECO:0007669"/>
    <property type="project" value="TreeGrafter"/>
</dbReference>
<dbReference type="CDD" id="cd24117">
    <property type="entry name" value="ASKHA_NBD_EcGppA-like"/>
    <property type="match status" value="1"/>
</dbReference>
<dbReference type="FunFam" id="1.10.3210.10:FF:000004">
    <property type="entry name" value="Guanosine-5'-triphosphate,3'-diphosphate pyrophosphatase"/>
    <property type="match status" value="1"/>
</dbReference>
<dbReference type="FunFam" id="3.30.420.150:FF:000001">
    <property type="entry name" value="Guanosine-5'-triphosphate,3'-diphosphate pyrophosphatase"/>
    <property type="match status" value="1"/>
</dbReference>
<dbReference type="FunFam" id="3.30.420.40:FF:000023">
    <property type="entry name" value="Guanosine-5'-triphosphate,3'-diphosphate pyrophosphatase"/>
    <property type="match status" value="1"/>
</dbReference>
<dbReference type="Gene3D" id="3.30.420.40">
    <property type="match status" value="1"/>
</dbReference>
<dbReference type="Gene3D" id="3.30.420.150">
    <property type="entry name" value="Exopolyphosphatase. Domain 2"/>
    <property type="match status" value="1"/>
</dbReference>
<dbReference type="Gene3D" id="1.10.3210.10">
    <property type="entry name" value="Hypothetical protein af1432"/>
    <property type="match status" value="1"/>
</dbReference>
<dbReference type="HAMAP" id="MF_01550">
    <property type="entry name" value="GppA"/>
    <property type="match status" value="1"/>
</dbReference>
<dbReference type="InterPro" id="IPR043129">
    <property type="entry name" value="ATPase_NBD"/>
</dbReference>
<dbReference type="InterPro" id="IPR050273">
    <property type="entry name" value="GppA/Ppx_hydrolase"/>
</dbReference>
<dbReference type="InterPro" id="IPR023709">
    <property type="entry name" value="Guo-5TP_3DP_PyrP"/>
</dbReference>
<dbReference type="InterPro" id="IPR048950">
    <property type="entry name" value="Ppx_GppA_C"/>
</dbReference>
<dbReference type="InterPro" id="IPR003695">
    <property type="entry name" value="Ppx_GppA_N"/>
</dbReference>
<dbReference type="InterPro" id="IPR030673">
    <property type="entry name" value="PyroPPase_GppA_Ppx"/>
</dbReference>
<dbReference type="NCBIfam" id="NF008260">
    <property type="entry name" value="PRK11031.1"/>
    <property type="match status" value="1"/>
</dbReference>
<dbReference type="PANTHER" id="PTHR30005">
    <property type="entry name" value="EXOPOLYPHOSPHATASE"/>
    <property type="match status" value="1"/>
</dbReference>
<dbReference type="PANTHER" id="PTHR30005:SF0">
    <property type="entry name" value="RETROGRADE REGULATION PROTEIN 2"/>
    <property type="match status" value="1"/>
</dbReference>
<dbReference type="Pfam" id="PF02541">
    <property type="entry name" value="Ppx-GppA"/>
    <property type="match status" value="1"/>
</dbReference>
<dbReference type="Pfam" id="PF21447">
    <property type="entry name" value="Ppx-GppA_III"/>
    <property type="match status" value="1"/>
</dbReference>
<dbReference type="PIRSF" id="PIRSF001267">
    <property type="entry name" value="Pyrophosphatase_GppA_Ppx"/>
    <property type="match status" value="1"/>
</dbReference>
<dbReference type="SUPFAM" id="SSF53067">
    <property type="entry name" value="Actin-like ATPase domain"/>
    <property type="match status" value="2"/>
</dbReference>
<dbReference type="SUPFAM" id="SSF109604">
    <property type="entry name" value="HD-domain/PDEase-like"/>
    <property type="match status" value="1"/>
</dbReference>
<organism>
    <name type="scientific">Escherichia coli (strain UTI89 / UPEC)</name>
    <dbReference type="NCBI Taxonomy" id="364106"/>
    <lineage>
        <taxon>Bacteria</taxon>
        <taxon>Pseudomonadati</taxon>
        <taxon>Pseudomonadota</taxon>
        <taxon>Gammaproteobacteria</taxon>
        <taxon>Enterobacterales</taxon>
        <taxon>Enterobacteriaceae</taxon>
        <taxon>Escherichia</taxon>
    </lineage>
</organism>
<evidence type="ECO:0000255" key="1">
    <source>
        <dbReference type="HAMAP-Rule" id="MF_01550"/>
    </source>
</evidence>
<evidence type="ECO:0000305" key="2"/>
<gene>
    <name evidence="1" type="primary">gppA</name>
    <name type="ordered locus">UTI89_C4333</name>
</gene>
<sequence>MGSTSSLYAAIDLGSNSFHMLVVREVAGSIQTLTRIKRKVRLAAGLNSENALSNEAMERGWQCLRLFAERLQDIPPSQIRVVATATLRLAVNAGDFIAKAQEILGCPVQVISGEEEARLIYQGVAHTTGGADQRLVVDIGGASTELVTGTGAQTTSLFSLSMGCVTWLERYFADRNLGQENFDAAEKAAREVLRPVADELRYHGWKVCVGASGTVQALQEIMMAQGMDERITLEKLQQLKQRAIHCGRLEELEIDGLTLERALVFPSGLAILIAIFTELNIQCMTLAGGALREGLVYGMLHLTVEQDIRSRTLRNIQRRFMIDIDQAQRVAKVAANFFDQVENEWHLEAISRDLLISACQLHEIGLSVDFKQAPQHAAYLVRNLDLPGFTPAQKKLLATLLLNQTNPVDLSSLHQQNAVPPRVAEQLCRLLRLAIIFASRRRDDLVPEMTLQANHELLTLTLPQGWLTQHPLGKEIIDQESQWQSYVHWPLEVH</sequence>
<accession>Q1R4G0</accession>
<comment type="function">
    <text evidence="1">Catalyzes the conversion of pppGpp to ppGpp. Guanosine pentaphosphate (pppGpp) is a cytoplasmic signaling molecule which together with ppGpp controls the 'stringent response', an adaptive process that allows bacteria to respond to amino acid starvation, resulting in the coordinated regulation of numerous cellular activities.</text>
</comment>
<comment type="catalytic activity">
    <reaction evidence="1">
        <text>guanosine 3'-diphosphate 5'-triphosphate + H2O = guanosine 3',5'-bis(diphosphate) + phosphate + H(+)</text>
        <dbReference type="Rhea" id="RHEA:13073"/>
        <dbReference type="ChEBI" id="CHEBI:15377"/>
        <dbReference type="ChEBI" id="CHEBI:15378"/>
        <dbReference type="ChEBI" id="CHEBI:43474"/>
        <dbReference type="ChEBI" id="CHEBI:77828"/>
        <dbReference type="ChEBI" id="CHEBI:142410"/>
        <dbReference type="EC" id="3.6.1.40"/>
    </reaction>
</comment>
<comment type="pathway">
    <text evidence="1">Purine metabolism; ppGpp biosynthesis; ppGpp from GTP: step 2/2.</text>
</comment>
<comment type="similarity">
    <text evidence="1">Belongs to the GppA/Ppx family. GppA subfamily.</text>
</comment>
<comment type="sequence caution" evidence="2">
    <conflict type="erroneous initiation">
        <sequence resource="EMBL-CDS" id="ABE09754"/>
    </conflict>
</comment>
<feature type="chain" id="PRO_0000314494" description="Guanosine-5'-triphosphate,3'-diphosphate pyrophosphatase">
    <location>
        <begin position="1"/>
        <end position="494"/>
    </location>
</feature>
<protein>
    <recommendedName>
        <fullName evidence="1">Guanosine-5'-triphosphate,3'-diphosphate pyrophosphatase</fullName>
        <ecNumber evidence="1">3.6.1.40</ecNumber>
    </recommendedName>
    <alternativeName>
        <fullName evidence="1">Guanosine pentaphosphate phosphohydrolase</fullName>
    </alternativeName>
    <alternativeName>
        <fullName evidence="1">pppGpp-5'-phosphohydrolase</fullName>
    </alternativeName>
</protein>